<protein>
    <recommendedName>
        <fullName evidence="2">Histidine--tRNA ligase</fullName>
        <ecNumber evidence="2">6.1.1.21</ecNumber>
    </recommendedName>
    <alternativeName>
        <fullName evidence="2">Histidyl-tRNA synthetase</fullName>
        <shortName evidence="2">HisRS</shortName>
    </alternativeName>
</protein>
<sequence length="426" mass="48199">MKLQKPKGTQDILPGDAAKWQYVESVARDTFSQYNYGEIRTPMFEHYEVISRSVGDTTDIVTKEMYDFYDKGDRHITLRPEGTAPVVRSYVENKLFAPEVQKPVKLYYIGSMFRYERPQAGRLREFHQIGVECFGAANPATDVETIAMAYHLFEKLGIKDVTLHLNSLGSPESRAAYRQALIDYLTPMRDQLSKDSQRRLDENPLRVLDSKEKEDKLAVEKAPSILDYLDEESQAHFEAVKDMLEALNIPYVIDTNMVRGLDYYNHTIFEFITSVEGSDLTICAGGRYDSLVGYFGGPETPGFGFGLGLERLLMVIEKQGITLPIETEMDVYLAVLGDGANSKALELVQAIRRQGFTAERDYLGRKIKAQFKSADTFKAKLVMTLGESEVEAGKAVIKNNRSRQEVEVSFEDMMTNFANISEQLLS</sequence>
<keyword id="KW-0030">Aminoacyl-tRNA synthetase</keyword>
<keyword id="KW-0067">ATP-binding</keyword>
<keyword id="KW-0963">Cytoplasm</keyword>
<keyword id="KW-0436">Ligase</keyword>
<keyword id="KW-0547">Nucleotide-binding</keyword>
<keyword id="KW-0648">Protein biosynthesis</keyword>
<dbReference type="EC" id="6.1.1.21" evidence="2"/>
<dbReference type="EMBL" id="AE009949">
    <property type="protein sequence ID" value="AAL98633.1"/>
    <property type="molecule type" value="Genomic_DNA"/>
</dbReference>
<dbReference type="RefSeq" id="WP_011018322.1">
    <property type="nucleotide sequence ID" value="NC_003485.1"/>
</dbReference>
<dbReference type="SMR" id="Q8NZ19"/>
<dbReference type="KEGG" id="spm:spyM18_2189"/>
<dbReference type="HOGENOM" id="CLU_025113_1_1_9"/>
<dbReference type="GO" id="GO:0005737">
    <property type="term" value="C:cytoplasm"/>
    <property type="evidence" value="ECO:0007669"/>
    <property type="project" value="UniProtKB-SubCell"/>
</dbReference>
<dbReference type="GO" id="GO:0005524">
    <property type="term" value="F:ATP binding"/>
    <property type="evidence" value="ECO:0007669"/>
    <property type="project" value="UniProtKB-UniRule"/>
</dbReference>
<dbReference type="GO" id="GO:0140096">
    <property type="term" value="F:catalytic activity, acting on a protein"/>
    <property type="evidence" value="ECO:0007669"/>
    <property type="project" value="UniProtKB-ARBA"/>
</dbReference>
<dbReference type="GO" id="GO:0004821">
    <property type="term" value="F:histidine-tRNA ligase activity"/>
    <property type="evidence" value="ECO:0007669"/>
    <property type="project" value="UniProtKB-UniRule"/>
</dbReference>
<dbReference type="GO" id="GO:0016740">
    <property type="term" value="F:transferase activity"/>
    <property type="evidence" value="ECO:0007669"/>
    <property type="project" value="UniProtKB-ARBA"/>
</dbReference>
<dbReference type="GO" id="GO:0006427">
    <property type="term" value="P:histidyl-tRNA aminoacylation"/>
    <property type="evidence" value="ECO:0007669"/>
    <property type="project" value="UniProtKB-UniRule"/>
</dbReference>
<dbReference type="CDD" id="cd00773">
    <property type="entry name" value="HisRS-like_core"/>
    <property type="match status" value="1"/>
</dbReference>
<dbReference type="CDD" id="cd00859">
    <property type="entry name" value="HisRS_anticodon"/>
    <property type="match status" value="1"/>
</dbReference>
<dbReference type="FunFam" id="3.30.930.10:FF:000005">
    <property type="entry name" value="Histidine--tRNA ligase"/>
    <property type="match status" value="1"/>
</dbReference>
<dbReference type="Gene3D" id="3.40.50.800">
    <property type="entry name" value="Anticodon-binding domain"/>
    <property type="match status" value="1"/>
</dbReference>
<dbReference type="Gene3D" id="3.30.930.10">
    <property type="entry name" value="Bira Bifunctional Protein, Domain 2"/>
    <property type="match status" value="1"/>
</dbReference>
<dbReference type="HAMAP" id="MF_00127">
    <property type="entry name" value="His_tRNA_synth"/>
    <property type="match status" value="1"/>
</dbReference>
<dbReference type="InterPro" id="IPR006195">
    <property type="entry name" value="aa-tRNA-synth_II"/>
</dbReference>
<dbReference type="InterPro" id="IPR045864">
    <property type="entry name" value="aa-tRNA-synth_II/BPL/LPL"/>
</dbReference>
<dbReference type="InterPro" id="IPR004154">
    <property type="entry name" value="Anticodon-bd"/>
</dbReference>
<dbReference type="InterPro" id="IPR036621">
    <property type="entry name" value="Anticodon-bd_dom_sf"/>
</dbReference>
<dbReference type="InterPro" id="IPR015807">
    <property type="entry name" value="His-tRNA-ligase"/>
</dbReference>
<dbReference type="InterPro" id="IPR041715">
    <property type="entry name" value="HisRS-like_core"/>
</dbReference>
<dbReference type="InterPro" id="IPR004516">
    <property type="entry name" value="HisRS/HisZ"/>
</dbReference>
<dbReference type="InterPro" id="IPR033656">
    <property type="entry name" value="HisRS_anticodon"/>
</dbReference>
<dbReference type="NCBIfam" id="TIGR00442">
    <property type="entry name" value="hisS"/>
    <property type="match status" value="1"/>
</dbReference>
<dbReference type="PANTHER" id="PTHR43707:SF1">
    <property type="entry name" value="HISTIDINE--TRNA LIGASE, MITOCHONDRIAL-RELATED"/>
    <property type="match status" value="1"/>
</dbReference>
<dbReference type="PANTHER" id="PTHR43707">
    <property type="entry name" value="HISTIDYL-TRNA SYNTHETASE"/>
    <property type="match status" value="1"/>
</dbReference>
<dbReference type="Pfam" id="PF03129">
    <property type="entry name" value="HGTP_anticodon"/>
    <property type="match status" value="1"/>
</dbReference>
<dbReference type="Pfam" id="PF13393">
    <property type="entry name" value="tRNA-synt_His"/>
    <property type="match status" value="1"/>
</dbReference>
<dbReference type="PIRSF" id="PIRSF001549">
    <property type="entry name" value="His-tRNA_synth"/>
    <property type="match status" value="1"/>
</dbReference>
<dbReference type="SUPFAM" id="SSF52954">
    <property type="entry name" value="Class II aaRS ABD-related"/>
    <property type="match status" value="1"/>
</dbReference>
<dbReference type="SUPFAM" id="SSF55681">
    <property type="entry name" value="Class II aaRS and biotin synthetases"/>
    <property type="match status" value="1"/>
</dbReference>
<dbReference type="PROSITE" id="PS50862">
    <property type="entry name" value="AA_TRNA_LIGASE_II"/>
    <property type="match status" value="1"/>
</dbReference>
<gene>
    <name evidence="2" type="primary">hisS</name>
    <name type="ordered locus">spyM18_2189</name>
</gene>
<comment type="catalytic activity">
    <reaction evidence="2">
        <text>tRNA(His) + L-histidine + ATP = L-histidyl-tRNA(His) + AMP + diphosphate + H(+)</text>
        <dbReference type="Rhea" id="RHEA:17313"/>
        <dbReference type="Rhea" id="RHEA-COMP:9665"/>
        <dbReference type="Rhea" id="RHEA-COMP:9689"/>
        <dbReference type="ChEBI" id="CHEBI:15378"/>
        <dbReference type="ChEBI" id="CHEBI:30616"/>
        <dbReference type="ChEBI" id="CHEBI:33019"/>
        <dbReference type="ChEBI" id="CHEBI:57595"/>
        <dbReference type="ChEBI" id="CHEBI:78442"/>
        <dbReference type="ChEBI" id="CHEBI:78527"/>
        <dbReference type="ChEBI" id="CHEBI:456215"/>
        <dbReference type="EC" id="6.1.1.21"/>
    </reaction>
</comment>
<comment type="subunit">
    <text evidence="2">Homodimer.</text>
</comment>
<comment type="subcellular location">
    <subcellularLocation>
        <location evidence="2">Cytoplasm</location>
    </subcellularLocation>
</comment>
<comment type="similarity">
    <text evidence="2">Belongs to the class-II aminoacyl-tRNA synthetase family.</text>
</comment>
<name>SYH_STRP8</name>
<evidence type="ECO:0000250" key="1"/>
<evidence type="ECO:0000255" key="2">
    <source>
        <dbReference type="HAMAP-Rule" id="MF_00127"/>
    </source>
</evidence>
<organism>
    <name type="scientific">Streptococcus pyogenes serotype M18 (strain MGAS8232)</name>
    <dbReference type="NCBI Taxonomy" id="186103"/>
    <lineage>
        <taxon>Bacteria</taxon>
        <taxon>Bacillati</taxon>
        <taxon>Bacillota</taxon>
        <taxon>Bacilli</taxon>
        <taxon>Lactobacillales</taxon>
        <taxon>Streptococcaceae</taxon>
        <taxon>Streptococcus</taxon>
    </lineage>
</organism>
<feature type="initiator methionine" description="Removed" evidence="1">
    <location>
        <position position="1"/>
    </location>
</feature>
<feature type="chain" id="PRO_0000136267" description="Histidine--tRNA ligase">
    <location>
        <begin position="2"/>
        <end position="426"/>
    </location>
</feature>
<reference key="1">
    <citation type="journal article" date="2002" name="Proc. Natl. Acad. Sci. U.S.A.">
        <title>Genome sequence and comparative microarray analysis of serotype M18 group A Streptococcus strains associated with acute rheumatic fever outbreaks.</title>
        <authorList>
            <person name="Smoot J.C."/>
            <person name="Barbian K.D."/>
            <person name="Van Gompel J.J."/>
            <person name="Smoot L.M."/>
            <person name="Chaussee M.S."/>
            <person name="Sylva G.L."/>
            <person name="Sturdevant D.E."/>
            <person name="Ricklefs S.M."/>
            <person name="Porcella S.F."/>
            <person name="Parkins L.D."/>
            <person name="Beres S.B."/>
            <person name="Campbell D.S."/>
            <person name="Smith T.M."/>
            <person name="Zhang Q."/>
            <person name="Kapur V."/>
            <person name="Daly J.A."/>
            <person name="Veasy L.G."/>
            <person name="Musser J.M."/>
        </authorList>
    </citation>
    <scope>NUCLEOTIDE SEQUENCE [LARGE SCALE GENOMIC DNA]</scope>
    <source>
        <strain>MGAS8232</strain>
    </source>
</reference>
<accession>Q8NZ19</accession>
<proteinExistence type="inferred from homology"/>